<dbReference type="EMBL" id="AE014298">
    <property type="protein sequence ID" value="AAF45575.1"/>
    <property type="molecule type" value="Genomic_DNA"/>
</dbReference>
<dbReference type="EMBL" id="BT120286">
    <property type="protein sequence ID" value="ADC32535.2"/>
    <property type="molecule type" value="mRNA"/>
</dbReference>
<dbReference type="EMBL" id="BT120287">
    <property type="protein sequence ID" value="ADC32536.1"/>
    <property type="molecule type" value="mRNA"/>
</dbReference>
<dbReference type="RefSeq" id="NP_569877.1">
    <property type="nucleotide sequence ID" value="NM_130521.1"/>
</dbReference>
<dbReference type="SMR" id="Q9W5B9"/>
<dbReference type="BioGRID" id="57614">
    <property type="interactions" value="1"/>
</dbReference>
<dbReference type="ComplexPortal" id="CPX-2251">
    <property type="entry name" value="General transcription factor complex TFIIA, TfIIA-S-2 variant"/>
</dbReference>
<dbReference type="DIP" id="DIP-20039N"/>
<dbReference type="FunCoup" id="Q9W5B9">
    <property type="interactions" value="42"/>
</dbReference>
<dbReference type="IntAct" id="Q9W5B9">
    <property type="interactions" value="2"/>
</dbReference>
<dbReference type="STRING" id="7227.FBpp0070177"/>
<dbReference type="PaxDb" id="7227-FBpp0070177"/>
<dbReference type="DNASU" id="31048"/>
<dbReference type="EnsemblMetazoa" id="FBtr0070184">
    <property type="protein sequence ID" value="FBpp0070177"/>
    <property type="gene ID" value="FBgn0040338"/>
</dbReference>
<dbReference type="GeneID" id="31048"/>
<dbReference type="KEGG" id="dme:Dmel_CG11639"/>
<dbReference type="UCSC" id="CG11639-RA">
    <property type="organism name" value="d. melanogaster"/>
</dbReference>
<dbReference type="AGR" id="FB:FBgn0040338"/>
<dbReference type="CTD" id="31048"/>
<dbReference type="FlyBase" id="FBgn0040338">
    <property type="gene designation" value="TfIIA-S-2"/>
</dbReference>
<dbReference type="VEuPathDB" id="VectorBase:FBgn0040338"/>
<dbReference type="eggNOG" id="KOG3463">
    <property type="taxonomic scope" value="Eukaryota"/>
</dbReference>
<dbReference type="GeneTree" id="ENSGT00390000014572"/>
<dbReference type="HOGENOM" id="CLU_112964_2_1_1"/>
<dbReference type="InParanoid" id="Q9W5B9"/>
<dbReference type="OMA" id="EDQHSMK"/>
<dbReference type="OrthoDB" id="586585at2759"/>
<dbReference type="PhylomeDB" id="Q9W5B9"/>
<dbReference type="BioGRID-ORCS" id="31048">
    <property type="hits" value="0 hits in 1 CRISPR screen"/>
</dbReference>
<dbReference type="ChiTaRS" id="TfIIA-S-2">
    <property type="organism name" value="fly"/>
</dbReference>
<dbReference type="GenomeRNAi" id="31048"/>
<dbReference type="PRO" id="PR:Q9W5B9"/>
<dbReference type="Proteomes" id="UP000000803">
    <property type="component" value="Chromosome X"/>
</dbReference>
<dbReference type="Bgee" id="FBgn0040338">
    <property type="expression patterns" value="Expressed in spermatogonium in testis and 20 other cell types or tissues"/>
</dbReference>
<dbReference type="ExpressionAtlas" id="Q9W5B9">
    <property type="expression patterns" value="baseline and differential"/>
</dbReference>
<dbReference type="GO" id="GO:0005672">
    <property type="term" value="C:transcription factor TFIIA complex"/>
    <property type="evidence" value="ECO:0000250"/>
    <property type="project" value="FlyBase"/>
</dbReference>
<dbReference type="GO" id="GO:0016251">
    <property type="term" value="F:RNA polymerase II general transcription initiation factor activity"/>
    <property type="evidence" value="ECO:0000318"/>
    <property type="project" value="GO_Central"/>
</dbReference>
<dbReference type="GO" id="GO:0017025">
    <property type="term" value="F:TBP-class protein binding"/>
    <property type="evidence" value="ECO:0000318"/>
    <property type="project" value="GO_Central"/>
</dbReference>
<dbReference type="GO" id="GO:0051123">
    <property type="term" value="P:RNA polymerase II preinitiation complex assembly"/>
    <property type="evidence" value="ECO:0000318"/>
    <property type="project" value="GO_Central"/>
</dbReference>
<dbReference type="GO" id="GO:0006367">
    <property type="term" value="P:transcription initiation at RNA polymerase II promoter"/>
    <property type="evidence" value="ECO:0000250"/>
    <property type="project" value="FlyBase"/>
</dbReference>
<dbReference type="CDD" id="cd10014">
    <property type="entry name" value="TFIIA_gamma_C"/>
    <property type="match status" value="1"/>
</dbReference>
<dbReference type="CDD" id="cd10145">
    <property type="entry name" value="TFIIA_gamma_N"/>
    <property type="match status" value="1"/>
</dbReference>
<dbReference type="FunFam" id="1.10.287.190:FF:000001">
    <property type="entry name" value="Transcription initiation factor IIA subunit 2"/>
    <property type="match status" value="1"/>
</dbReference>
<dbReference type="FunFam" id="2.30.18.10:FF:000011">
    <property type="entry name" value="Transcription initiation factor IIA subunit 2"/>
    <property type="match status" value="1"/>
</dbReference>
<dbReference type="Gene3D" id="2.30.18.10">
    <property type="entry name" value="Transcription factor IIA (TFIIA), beta-barrel domain"/>
    <property type="match status" value="1"/>
</dbReference>
<dbReference type="Gene3D" id="1.10.287.190">
    <property type="entry name" value="Transcription factor IIA gamma subunit, alpha-helical domain"/>
    <property type="match status" value="1"/>
</dbReference>
<dbReference type="InterPro" id="IPR009083">
    <property type="entry name" value="TFIIA_a-hlx"/>
</dbReference>
<dbReference type="InterPro" id="IPR009088">
    <property type="entry name" value="TFIIA_b-brl"/>
</dbReference>
<dbReference type="InterPro" id="IPR003194">
    <property type="entry name" value="TFIIA_gsu"/>
</dbReference>
<dbReference type="InterPro" id="IPR015871">
    <property type="entry name" value="TFIIA_gsu_C"/>
</dbReference>
<dbReference type="InterPro" id="IPR015872">
    <property type="entry name" value="TFIIA_gsu_N"/>
</dbReference>
<dbReference type="PANTHER" id="PTHR10966">
    <property type="entry name" value="TRANSCRIPTION INITIATION FACTOR IIA SUBUNIT 2"/>
    <property type="match status" value="1"/>
</dbReference>
<dbReference type="Pfam" id="PF02751">
    <property type="entry name" value="TFIIA_gamma_C"/>
    <property type="match status" value="1"/>
</dbReference>
<dbReference type="Pfam" id="PF02268">
    <property type="entry name" value="TFIIA_gamma_N"/>
    <property type="match status" value="1"/>
</dbReference>
<dbReference type="PIRSF" id="PIRSF009415">
    <property type="entry name" value="Hum_TFIIA_gamma"/>
    <property type="match status" value="1"/>
</dbReference>
<dbReference type="SUPFAM" id="SSF47396">
    <property type="entry name" value="Transcription factor IIA (TFIIA), alpha-helical domain"/>
    <property type="match status" value="1"/>
</dbReference>
<dbReference type="SUPFAM" id="SSF50784">
    <property type="entry name" value="Transcription factor IIA (TFIIA), beta-barrel domain"/>
    <property type="match status" value="1"/>
</dbReference>
<gene>
    <name type="primary">TfIIA-S-2</name>
    <name type="ORF">CG11639</name>
</gene>
<organism>
    <name type="scientific">Drosophila melanogaster</name>
    <name type="common">Fruit fly</name>
    <dbReference type="NCBI Taxonomy" id="7227"/>
    <lineage>
        <taxon>Eukaryota</taxon>
        <taxon>Metazoa</taxon>
        <taxon>Ecdysozoa</taxon>
        <taxon>Arthropoda</taxon>
        <taxon>Hexapoda</taxon>
        <taxon>Insecta</taxon>
        <taxon>Pterygota</taxon>
        <taxon>Neoptera</taxon>
        <taxon>Endopterygota</taxon>
        <taxon>Diptera</taxon>
        <taxon>Brachycera</taxon>
        <taxon>Muscomorpha</taxon>
        <taxon>Ephydroidea</taxon>
        <taxon>Drosophilidae</taxon>
        <taxon>Drosophila</taxon>
        <taxon>Sophophora</taxon>
    </lineage>
</organism>
<accession>Q9W5B9</accession>
<accession>D3DMX0</accession>
<accession>D3DMX1</accession>
<reference key="1">
    <citation type="journal article" date="2000" name="Science">
        <title>The genome sequence of Drosophila melanogaster.</title>
        <authorList>
            <person name="Adams M.D."/>
            <person name="Celniker S.E."/>
            <person name="Holt R.A."/>
            <person name="Evans C.A."/>
            <person name="Gocayne J.D."/>
            <person name="Amanatides P.G."/>
            <person name="Scherer S.E."/>
            <person name="Li P.W."/>
            <person name="Hoskins R.A."/>
            <person name="Galle R.F."/>
            <person name="George R.A."/>
            <person name="Lewis S.E."/>
            <person name="Richards S."/>
            <person name="Ashburner M."/>
            <person name="Henderson S.N."/>
            <person name="Sutton G.G."/>
            <person name="Wortman J.R."/>
            <person name="Yandell M.D."/>
            <person name="Zhang Q."/>
            <person name="Chen L.X."/>
            <person name="Brandon R.C."/>
            <person name="Rogers Y.-H.C."/>
            <person name="Blazej R.G."/>
            <person name="Champe M."/>
            <person name="Pfeiffer B.D."/>
            <person name="Wan K.H."/>
            <person name="Doyle C."/>
            <person name="Baxter E.G."/>
            <person name="Helt G."/>
            <person name="Nelson C.R."/>
            <person name="Miklos G.L.G."/>
            <person name="Abril J.F."/>
            <person name="Agbayani A."/>
            <person name="An H.-J."/>
            <person name="Andrews-Pfannkoch C."/>
            <person name="Baldwin D."/>
            <person name="Ballew R.M."/>
            <person name="Basu A."/>
            <person name="Baxendale J."/>
            <person name="Bayraktaroglu L."/>
            <person name="Beasley E.M."/>
            <person name="Beeson K.Y."/>
            <person name="Benos P.V."/>
            <person name="Berman B.P."/>
            <person name="Bhandari D."/>
            <person name="Bolshakov S."/>
            <person name="Borkova D."/>
            <person name="Botchan M.R."/>
            <person name="Bouck J."/>
            <person name="Brokstein P."/>
            <person name="Brottier P."/>
            <person name="Burtis K.C."/>
            <person name="Busam D.A."/>
            <person name="Butler H."/>
            <person name="Cadieu E."/>
            <person name="Center A."/>
            <person name="Chandra I."/>
            <person name="Cherry J.M."/>
            <person name="Cawley S."/>
            <person name="Dahlke C."/>
            <person name="Davenport L.B."/>
            <person name="Davies P."/>
            <person name="de Pablos B."/>
            <person name="Delcher A."/>
            <person name="Deng Z."/>
            <person name="Mays A.D."/>
            <person name="Dew I."/>
            <person name="Dietz S.M."/>
            <person name="Dodson K."/>
            <person name="Doup L.E."/>
            <person name="Downes M."/>
            <person name="Dugan-Rocha S."/>
            <person name="Dunkov B.C."/>
            <person name="Dunn P."/>
            <person name="Durbin K.J."/>
            <person name="Evangelista C.C."/>
            <person name="Ferraz C."/>
            <person name="Ferriera S."/>
            <person name="Fleischmann W."/>
            <person name="Fosler C."/>
            <person name="Gabrielian A.E."/>
            <person name="Garg N.S."/>
            <person name="Gelbart W.M."/>
            <person name="Glasser K."/>
            <person name="Glodek A."/>
            <person name="Gong F."/>
            <person name="Gorrell J.H."/>
            <person name="Gu Z."/>
            <person name="Guan P."/>
            <person name="Harris M."/>
            <person name="Harris N.L."/>
            <person name="Harvey D.A."/>
            <person name="Heiman T.J."/>
            <person name="Hernandez J.R."/>
            <person name="Houck J."/>
            <person name="Hostin D."/>
            <person name="Houston K.A."/>
            <person name="Howland T.J."/>
            <person name="Wei M.-H."/>
            <person name="Ibegwam C."/>
            <person name="Jalali M."/>
            <person name="Kalush F."/>
            <person name="Karpen G.H."/>
            <person name="Ke Z."/>
            <person name="Kennison J.A."/>
            <person name="Ketchum K.A."/>
            <person name="Kimmel B.E."/>
            <person name="Kodira C.D."/>
            <person name="Kraft C.L."/>
            <person name="Kravitz S."/>
            <person name="Kulp D."/>
            <person name="Lai Z."/>
            <person name="Lasko P."/>
            <person name="Lei Y."/>
            <person name="Levitsky A.A."/>
            <person name="Li J.H."/>
            <person name="Li Z."/>
            <person name="Liang Y."/>
            <person name="Lin X."/>
            <person name="Liu X."/>
            <person name="Mattei B."/>
            <person name="McIntosh T.C."/>
            <person name="McLeod M.P."/>
            <person name="McPherson D."/>
            <person name="Merkulov G."/>
            <person name="Milshina N.V."/>
            <person name="Mobarry C."/>
            <person name="Morris J."/>
            <person name="Moshrefi A."/>
            <person name="Mount S.M."/>
            <person name="Moy M."/>
            <person name="Murphy B."/>
            <person name="Murphy L."/>
            <person name="Muzny D.M."/>
            <person name="Nelson D.L."/>
            <person name="Nelson D.R."/>
            <person name="Nelson K.A."/>
            <person name="Nixon K."/>
            <person name="Nusskern D.R."/>
            <person name="Pacleb J.M."/>
            <person name="Palazzolo M."/>
            <person name="Pittman G.S."/>
            <person name="Pan S."/>
            <person name="Pollard J."/>
            <person name="Puri V."/>
            <person name="Reese M.G."/>
            <person name="Reinert K."/>
            <person name="Remington K."/>
            <person name="Saunders R.D.C."/>
            <person name="Scheeler F."/>
            <person name="Shen H."/>
            <person name="Shue B.C."/>
            <person name="Siden-Kiamos I."/>
            <person name="Simpson M."/>
            <person name="Skupski M.P."/>
            <person name="Smith T.J."/>
            <person name="Spier E."/>
            <person name="Spradling A.C."/>
            <person name="Stapleton M."/>
            <person name="Strong R."/>
            <person name="Sun E."/>
            <person name="Svirskas R."/>
            <person name="Tector C."/>
            <person name="Turner R."/>
            <person name="Venter E."/>
            <person name="Wang A.H."/>
            <person name="Wang X."/>
            <person name="Wang Z.-Y."/>
            <person name="Wassarman D.A."/>
            <person name="Weinstock G.M."/>
            <person name="Weissenbach J."/>
            <person name="Williams S.M."/>
            <person name="Woodage T."/>
            <person name="Worley K.C."/>
            <person name="Wu D."/>
            <person name="Yang S."/>
            <person name="Yao Q.A."/>
            <person name="Ye J."/>
            <person name="Yeh R.-F."/>
            <person name="Zaveri J.S."/>
            <person name="Zhan M."/>
            <person name="Zhang G."/>
            <person name="Zhao Q."/>
            <person name="Zheng L."/>
            <person name="Zheng X.H."/>
            <person name="Zhong F.N."/>
            <person name="Zhong W."/>
            <person name="Zhou X."/>
            <person name="Zhu S.C."/>
            <person name="Zhu X."/>
            <person name="Smith H.O."/>
            <person name="Gibbs R.A."/>
            <person name="Myers E.W."/>
            <person name="Rubin G.M."/>
            <person name="Venter J.C."/>
        </authorList>
    </citation>
    <scope>NUCLEOTIDE SEQUENCE [LARGE SCALE GENOMIC DNA]</scope>
    <source>
        <strain>Berkeley</strain>
    </source>
</reference>
<reference key="2">
    <citation type="journal article" date="2002" name="Genome Biol.">
        <title>Annotation of the Drosophila melanogaster euchromatic genome: a systematic review.</title>
        <authorList>
            <person name="Misra S."/>
            <person name="Crosby M.A."/>
            <person name="Mungall C.J."/>
            <person name="Matthews B.B."/>
            <person name="Campbell K.S."/>
            <person name="Hradecky P."/>
            <person name="Huang Y."/>
            <person name="Kaminker J.S."/>
            <person name="Millburn G.H."/>
            <person name="Prochnik S.E."/>
            <person name="Smith C.D."/>
            <person name="Tupy J.L."/>
            <person name="Whitfield E.J."/>
            <person name="Bayraktaroglu L."/>
            <person name="Berman B.P."/>
            <person name="Bettencourt B.R."/>
            <person name="Celniker S.E."/>
            <person name="de Grey A.D.N.J."/>
            <person name="Drysdale R.A."/>
            <person name="Harris N.L."/>
            <person name="Richter J."/>
            <person name="Russo S."/>
            <person name="Schroeder A.J."/>
            <person name="Shu S.Q."/>
            <person name="Stapleton M."/>
            <person name="Yamada C."/>
            <person name="Ashburner M."/>
            <person name="Gelbart W.M."/>
            <person name="Rubin G.M."/>
            <person name="Lewis S.E."/>
        </authorList>
    </citation>
    <scope>GENOME REANNOTATION</scope>
    <source>
        <strain>Berkeley</strain>
    </source>
</reference>
<reference key="3">
    <citation type="submission" date="2010-04" db="EMBL/GenBank/DDBJ databases">
        <authorList>
            <person name="Carlson J."/>
            <person name="Booth B."/>
            <person name="Frise E."/>
            <person name="Park S."/>
            <person name="Wan K."/>
            <person name="Yu C."/>
            <person name="Celniker S."/>
        </authorList>
    </citation>
    <scope>NUCLEOTIDE SEQUENCE [LARGE SCALE MRNA]</scope>
    <source>
        <strain>Berkeley</strain>
    </source>
</reference>
<protein>
    <recommendedName>
        <fullName>Transcription initiation factor IIA subunit 2-2</fullName>
    </recommendedName>
    <alternativeName>
        <fullName>General transcription factor IIA subunit 2-2</fullName>
    </alternativeName>
    <alternativeName>
        <fullName>Transcription initiation factor IIA gamma-2 chain</fullName>
        <shortName>TFIIA-gamma-2</shortName>
    </alternativeName>
</protein>
<evidence type="ECO:0000250" key="1"/>
<evidence type="ECO:0000305" key="2"/>
<keyword id="KW-0539">Nucleus</keyword>
<keyword id="KW-1185">Reference proteome</keyword>
<keyword id="KW-0804">Transcription</keyword>
<keyword id="KW-0805">Transcription regulation</keyword>
<name>T2AH_DROME</name>
<proteinExistence type="evidence at protein level"/>
<sequence>MNYQHYRATTLGRTLQDTLDEMMERGDITKKIANLVLLRYDKSISTALKDHGTSNMSFTAERLETFRCCDNVWTLILKDAEFREDQHSLKVDVVKIVACLGTDNGNE</sequence>
<comment type="function">
    <text evidence="1">TFIIA is a component of the transcription machinery of RNA polymerase II and plays an important role in transcriptional activation. TFIIA in a complex with TBP mediates transcriptional activity (By similarity).</text>
</comment>
<comment type="subunit">
    <text evidence="1">TFIIA is a heterodimer of the large unprocessed subunit 1 and a small subunit gamma. It was originally believed to be a heterotrimer of an alpha (p30), a beta (p20) and a gamma (p14) subunit (By similarity).</text>
</comment>
<comment type="interaction">
    <interactant intactId="EBI-181168">
        <id>Q9W5B9</id>
    </interactant>
    <interactant intactId="EBI-132413">
        <id>P52654</id>
        <label>TfIIA-L</label>
    </interactant>
    <organismsDiffer>false</organismsDiffer>
    <experiments>5</experiments>
</comment>
<comment type="subcellular location">
    <subcellularLocation>
        <location evidence="1">Nucleus</location>
    </subcellularLocation>
</comment>
<comment type="similarity">
    <text evidence="2">Belongs to the TFIIA subunit 2 family.</text>
</comment>
<feature type="chain" id="PRO_0000194049" description="Transcription initiation factor IIA subunit 2-2">
    <location>
        <begin position="1"/>
        <end position="107"/>
    </location>
</feature>